<feature type="chain" id="PRO_1000020435" description="Threonine--tRNA ligase">
    <location>
        <begin position="1"/>
        <end position="614"/>
    </location>
</feature>
<feature type="region of interest" description="Editing domain" evidence="1">
    <location>
        <begin position="1"/>
        <end position="138"/>
    </location>
</feature>
<feature type="region of interest" description="Disordered" evidence="2">
    <location>
        <begin position="133"/>
        <end position="157"/>
    </location>
</feature>
<feature type="region of interest" description="Catalytic" evidence="1">
    <location>
        <begin position="200"/>
        <end position="495"/>
    </location>
</feature>
<feature type="compositionally biased region" description="Acidic residues" evidence="2">
    <location>
        <begin position="141"/>
        <end position="154"/>
    </location>
</feature>
<feature type="binding site" evidence="1">
    <location>
        <position position="292"/>
    </location>
    <ligand>
        <name>Zn(2+)</name>
        <dbReference type="ChEBI" id="CHEBI:29105"/>
    </ligand>
</feature>
<feature type="binding site" evidence="1">
    <location>
        <position position="344"/>
    </location>
    <ligand>
        <name>Zn(2+)</name>
        <dbReference type="ChEBI" id="CHEBI:29105"/>
    </ligand>
</feature>
<feature type="binding site" evidence="1">
    <location>
        <position position="466"/>
    </location>
    <ligand>
        <name>Zn(2+)</name>
        <dbReference type="ChEBI" id="CHEBI:29105"/>
    </ligand>
</feature>
<protein>
    <recommendedName>
        <fullName evidence="1">Threonine--tRNA ligase</fullName>
        <ecNumber evidence="1">6.1.1.3</ecNumber>
    </recommendedName>
    <alternativeName>
        <fullName evidence="1">Threonyl-tRNA synthetase</fullName>
        <shortName evidence="1">ThrRS</shortName>
    </alternativeName>
</protein>
<name>SYT_METST</name>
<dbReference type="EC" id="6.1.1.3" evidence="1"/>
<dbReference type="EMBL" id="CP000102">
    <property type="protein sequence ID" value="ABC57940.1"/>
    <property type="molecule type" value="Genomic_DNA"/>
</dbReference>
<dbReference type="RefSeq" id="WP_011407139.1">
    <property type="nucleotide sequence ID" value="NC_007681.1"/>
</dbReference>
<dbReference type="SMR" id="Q2NE13"/>
<dbReference type="STRING" id="339860.Msp_1573"/>
<dbReference type="KEGG" id="mst:Msp_1573"/>
<dbReference type="eggNOG" id="arCOG00401">
    <property type="taxonomic scope" value="Archaea"/>
</dbReference>
<dbReference type="HOGENOM" id="CLU_029833_0_0_2"/>
<dbReference type="OrthoDB" id="372136at2157"/>
<dbReference type="Proteomes" id="UP000001931">
    <property type="component" value="Chromosome"/>
</dbReference>
<dbReference type="GO" id="GO:0005737">
    <property type="term" value="C:cytoplasm"/>
    <property type="evidence" value="ECO:0007669"/>
    <property type="project" value="UniProtKB-SubCell"/>
</dbReference>
<dbReference type="GO" id="GO:0005524">
    <property type="term" value="F:ATP binding"/>
    <property type="evidence" value="ECO:0007669"/>
    <property type="project" value="UniProtKB-UniRule"/>
</dbReference>
<dbReference type="GO" id="GO:0004829">
    <property type="term" value="F:threonine-tRNA ligase activity"/>
    <property type="evidence" value="ECO:0007669"/>
    <property type="project" value="UniProtKB-UniRule"/>
</dbReference>
<dbReference type="GO" id="GO:0000049">
    <property type="term" value="F:tRNA binding"/>
    <property type="evidence" value="ECO:0007669"/>
    <property type="project" value="UniProtKB-KW"/>
</dbReference>
<dbReference type="GO" id="GO:0008270">
    <property type="term" value="F:zinc ion binding"/>
    <property type="evidence" value="ECO:0007669"/>
    <property type="project" value="InterPro"/>
</dbReference>
<dbReference type="GO" id="GO:0006435">
    <property type="term" value="P:threonyl-tRNA aminoacylation"/>
    <property type="evidence" value="ECO:0007669"/>
    <property type="project" value="UniProtKB-UniRule"/>
</dbReference>
<dbReference type="CDD" id="cd00860">
    <property type="entry name" value="ThrRS_anticodon"/>
    <property type="match status" value="1"/>
</dbReference>
<dbReference type="FunFam" id="3.40.50.800:FF:000001">
    <property type="entry name" value="Threonine--tRNA ligase"/>
    <property type="match status" value="1"/>
</dbReference>
<dbReference type="FunFam" id="3.50.80.10:FF:000004">
    <property type="entry name" value="Threonine--tRNA ligase"/>
    <property type="match status" value="1"/>
</dbReference>
<dbReference type="Gene3D" id="3.40.50.800">
    <property type="entry name" value="Anticodon-binding domain"/>
    <property type="match status" value="1"/>
</dbReference>
<dbReference type="Gene3D" id="3.30.930.10">
    <property type="entry name" value="Bira Bifunctional Protein, Domain 2"/>
    <property type="match status" value="1"/>
</dbReference>
<dbReference type="Gene3D" id="3.50.80.10">
    <property type="entry name" value="D-tyrosyl-tRNA(Tyr) deacylase"/>
    <property type="match status" value="1"/>
</dbReference>
<dbReference type="HAMAP" id="MF_00184">
    <property type="entry name" value="Thr_tRNA_synth"/>
    <property type="match status" value="1"/>
</dbReference>
<dbReference type="InterPro" id="IPR002314">
    <property type="entry name" value="aa-tRNA-synt_IIb"/>
</dbReference>
<dbReference type="InterPro" id="IPR006195">
    <property type="entry name" value="aa-tRNA-synth_II"/>
</dbReference>
<dbReference type="InterPro" id="IPR045864">
    <property type="entry name" value="aa-tRNA-synth_II/BPL/LPL"/>
</dbReference>
<dbReference type="InterPro" id="IPR004154">
    <property type="entry name" value="Anticodon-bd"/>
</dbReference>
<dbReference type="InterPro" id="IPR036621">
    <property type="entry name" value="Anticodon-bd_dom_sf"/>
</dbReference>
<dbReference type="InterPro" id="IPR023509">
    <property type="entry name" value="DTD-like_sf"/>
</dbReference>
<dbReference type="InterPro" id="IPR002320">
    <property type="entry name" value="Thr-tRNA-ligase_IIa"/>
</dbReference>
<dbReference type="InterPro" id="IPR015011">
    <property type="entry name" value="Threonyl-tRNA_syn_edit_dom_arc"/>
</dbReference>
<dbReference type="InterPro" id="IPR047246">
    <property type="entry name" value="ThrRS_anticodon"/>
</dbReference>
<dbReference type="NCBIfam" id="NF003068">
    <property type="entry name" value="PRK03991.1"/>
    <property type="match status" value="1"/>
</dbReference>
<dbReference type="NCBIfam" id="TIGR00418">
    <property type="entry name" value="thrS"/>
    <property type="match status" value="1"/>
</dbReference>
<dbReference type="PANTHER" id="PTHR11451:SF44">
    <property type="entry name" value="THREONINE--TRNA LIGASE, CHLOROPLASTIC_MITOCHONDRIAL 2"/>
    <property type="match status" value="1"/>
</dbReference>
<dbReference type="PANTHER" id="PTHR11451">
    <property type="entry name" value="THREONINE-TRNA LIGASE"/>
    <property type="match status" value="1"/>
</dbReference>
<dbReference type="Pfam" id="PF03129">
    <property type="entry name" value="HGTP_anticodon"/>
    <property type="match status" value="1"/>
</dbReference>
<dbReference type="Pfam" id="PF00587">
    <property type="entry name" value="tRNA-synt_2b"/>
    <property type="match status" value="1"/>
</dbReference>
<dbReference type="Pfam" id="PF08915">
    <property type="entry name" value="tRNA-Thr_ED"/>
    <property type="match status" value="1"/>
</dbReference>
<dbReference type="PRINTS" id="PR01047">
    <property type="entry name" value="TRNASYNTHTHR"/>
</dbReference>
<dbReference type="SUPFAM" id="SSF52954">
    <property type="entry name" value="Class II aaRS ABD-related"/>
    <property type="match status" value="1"/>
</dbReference>
<dbReference type="SUPFAM" id="SSF55681">
    <property type="entry name" value="Class II aaRS and biotin synthetases"/>
    <property type="match status" value="1"/>
</dbReference>
<dbReference type="PROSITE" id="PS50862">
    <property type="entry name" value="AA_TRNA_LIGASE_II"/>
    <property type="match status" value="1"/>
</dbReference>
<organism>
    <name type="scientific">Methanosphaera stadtmanae (strain ATCC 43021 / DSM 3091 / JCM 11832 / MCB-3)</name>
    <dbReference type="NCBI Taxonomy" id="339860"/>
    <lineage>
        <taxon>Archaea</taxon>
        <taxon>Methanobacteriati</taxon>
        <taxon>Methanobacteriota</taxon>
        <taxon>Methanomada group</taxon>
        <taxon>Methanobacteria</taxon>
        <taxon>Methanobacteriales</taxon>
        <taxon>Methanobacteriaceae</taxon>
        <taxon>Methanosphaera</taxon>
    </lineage>
</organism>
<proteinExistence type="inferred from homology"/>
<accession>Q2NE13</accession>
<comment type="function">
    <text evidence="1">Catalyzes the attachment of threonine to tRNA(Thr) in a two-step reaction: L-threonine is first activated by ATP to form Thr-AMP and then transferred to the acceptor end of tRNA(Thr). Also edits incorrectly charged L-seryl-tRNA(Thr).</text>
</comment>
<comment type="catalytic activity">
    <reaction evidence="1">
        <text>tRNA(Thr) + L-threonine + ATP = L-threonyl-tRNA(Thr) + AMP + diphosphate + H(+)</text>
        <dbReference type="Rhea" id="RHEA:24624"/>
        <dbReference type="Rhea" id="RHEA-COMP:9670"/>
        <dbReference type="Rhea" id="RHEA-COMP:9704"/>
        <dbReference type="ChEBI" id="CHEBI:15378"/>
        <dbReference type="ChEBI" id="CHEBI:30616"/>
        <dbReference type="ChEBI" id="CHEBI:33019"/>
        <dbReference type="ChEBI" id="CHEBI:57926"/>
        <dbReference type="ChEBI" id="CHEBI:78442"/>
        <dbReference type="ChEBI" id="CHEBI:78534"/>
        <dbReference type="ChEBI" id="CHEBI:456215"/>
        <dbReference type="EC" id="6.1.1.3"/>
    </reaction>
</comment>
<comment type="cofactor">
    <cofactor evidence="1">
        <name>Zn(2+)</name>
        <dbReference type="ChEBI" id="CHEBI:29105"/>
    </cofactor>
    <text evidence="1">Binds 1 zinc ion per subunit.</text>
</comment>
<comment type="subunit">
    <text evidence="1">Homodimer.</text>
</comment>
<comment type="subcellular location">
    <subcellularLocation>
        <location evidence="1">Cytoplasm</location>
    </subcellularLocation>
</comment>
<comment type="domain">
    <text evidence="1">The N-terminal domain is an archaea-specific tRNA-editing domain that hydrolyzes incorrectly charged L-seryl-tRNA(Thr). Catalysis of tRNA editing is performed by the charged tRNA itself.</text>
</comment>
<comment type="similarity">
    <text evidence="1">Belongs to the class-II aminoacyl-tRNA synthetase family.</text>
</comment>
<keyword id="KW-0030">Aminoacyl-tRNA synthetase</keyword>
<keyword id="KW-0067">ATP-binding</keyword>
<keyword id="KW-0963">Cytoplasm</keyword>
<keyword id="KW-0436">Ligase</keyword>
<keyword id="KW-0479">Metal-binding</keyword>
<keyword id="KW-0547">Nucleotide-binding</keyword>
<keyword id="KW-0648">Protein biosynthesis</keyword>
<keyword id="KW-1185">Reference proteome</keyword>
<keyword id="KW-0694">RNA-binding</keyword>
<keyword id="KW-0820">tRNA-binding</keyword>
<keyword id="KW-0862">Zinc</keyword>
<reference key="1">
    <citation type="journal article" date="2006" name="J. Bacteriol.">
        <title>The genome sequence of Methanosphaera stadtmanae reveals why this human intestinal archaeon is restricted to methanol and H2 for methane formation and ATP synthesis.</title>
        <authorList>
            <person name="Fricke W.F."/>
            <person name="Seedorf H."/>
            <person name="Henne A."/>
            <person name="Kruer M."/>
            <person name="Liesegang H."/>
            <person name="Hedderich R."/>
            <person name="Gottschalk G."/>
            <person name="Thauer R.K."/>
        </authorList>
    </citation>
    <scope>NUCLEOTIDE SEQUENCE [LARGE SCALE GENOMIC DNA]</scope>
    <source>
        <strain>ATCC 43021 / DSM 3091 / JCM 11832 / MCB-3</strain>
    </source>
</reference>
<evidence type="ECO:0000255" key="1">
    <source>
        <dbReference type="HAMAP-Rule" id="MF_00184"/>
    </source>
</evidence>
<evidence type="ECO:0000256" key="2">
    <source>
        <dbReference type="SAM" id="MobiDB-lite"/>
    </source>
</evidence>
<sequence length="614" mass="70986">MRTLMIHSDYLRYKTRSKTKIAEDIDDEKRVSGVDEALVAFIAVEKEDEENPELIINKAVKEILNVQNKVNAENIVIYPYAHLSSSLSNPDIAQKILKGIEAELLDNNEAVLRVPFGWYKSFELSCKGHPLSELSRTITTEPEEESEDSEEEPSEPSKMFILEEDGNIFDVEEYNYKNKTLRQLVDHEEGKTKDTGKQPPHVRLMREKELASNEPAADVGHIRWYPKGKLVKDLLSDYVYQLVTQRGAMPVETPVMYDLANPAIREHAEKFGERQYRLKTKHRELMLRFACCFGAFRILADSFLTWKNMPVGIYELSTFSFRFERQGEVVGLKRLRAFTMPDFHSVCLNDDHAREVFANQVDMCAQTETDLDVHYEVAFRVTQDFFDENEDWIKEVVKNNIKKPVLLEVIPKMKHYWNAKVDFAAIDDLGRPIENPTVQMDIQSAKRFGITYLDENEEQQYPTILHCSPTGSIERVICSLLEKTSTDKGNKPSLPLWLAPTQVRIIPVTDNHLDYAKEIYQQIRDSNIRVDIDDTAERVGKKIRNAGKEWIPYTIVVGDNEVENNSISVNRRVDNTKEEISIEDLAEEIHTLTKDMPFRQLPLPYMVSKRVKFD</sequence>
<gene>
    <name evidence="1" type="primary">thrS</name>
    <name type="ordered locus">Msp_1573</name>
</gene>